<keyword id="KW-0068">Autocatalytic cleavage</keyword>
<keyword id="KW-0963">Cytoplasm</keyword>
<keyword id="KW-0378">Hydrolase</keyword>
<keyword id="KW-0645">Protease</keyword>
<keyword id="KW-0647">Proteasome</keyword>
<keyword id="KW-0888">Threonine protease</keyword>
<keyword id="KW-0865">Zymogen</keyword>
<protein>
    <recommendedName>
        <fullName evidence="1">Proteasome subunit beta</fullName>
        <ecNumber evidence="1">3.4.25.1</ecNumber>
    </recommendedName>
    <alternativeName>
        <fullName evidence="1">20S proteasome beta subunit</fullName>
    </alternativeName>
    <alternativeName>
        <fullName evidence="1">Proteasome core protein PrcB</fullName>
    </alternativeName>
</protein>
<name>PSB_RHOOB</name>
<comment type="function">
    <text evidence="1">Component of the proteasome core, a large protease complex with broad specificity involved in protein degradation.</text>
</comment>
<comment type="catalytic activity">
    <reaction evidence="1">
        <text>Cleavage of peptide bonds with very broad specificity.</text>
        <dbReference type="EC" id="3.4.25.1"/>
    </reaction>
</comment>
<comment type="activity regulation">
    <text evidence="1">The formation of the proteasomal ATPase ARC-20S proteasome complex, likely via the docking of the C-termini of ARC into the intersubunit pockets in the alpha-rings, may trigger opening of the gate for substrate entry. Interconversion between the open-gate and close-gate conformations leads to a dynamic regulation of the 20S proteasome proteolysis activity.</text>
</comment>
<comment type="pathway">
    <text evidence="1">Protein degradation; proteasomal Pup-dependent pathway.</text>
</comment>
<comment type="subunit">
    <text evidence="1">The 20S proteasome core is composed of 14 alpha and 14 beta subunits that assemble into four stacked heptameric rings, resulting in a barrel-shaped structure. The two inner rings, each composed of seven catalytic beta subunits, are sandwiched by two outer rings, each composed of seven alpha subunits. The catalytic chamber with the active sites is on the inside of the barrel. Has a gated structure, the ends of the cylinder being occluded by the N-termini of the alpha-subunits. Is capped by the proteasome-associated ATPase, ARC.</text>
</comment>
<comment type="subcellular location">
    <subcellularLocation>
        <location evidence="1">Cytoplasm</location>
    </subcellularLocation>
</comment>
<comment type="similarity">
    <text evidence="1">Belongs to the peptidase T1B family.</text>
</comment>
<organism>
    <name type="scientific">Rhodococcus opacus (strain B4)</name>
    <dbReference type="NCBI Taxonomy" id="632772"/>
    <lineage>
        <taxon>Bacteria</taxon>
        <taxon>Bacillati</taxon>
        <taxon>Actinomycetota</taxon>
        <taxon>Actinomycetes</taxon>
        <taxon>Mycobacteriales</taxon>
        <taxon>Nocardiaceae</taxon>
        <taxon>Rhodococcus</taxon>
    </lineage>
</organism>
<sequence length="294" mass="31074">MTADRPALRTGDGDTRLSFGSNLSSFTEYLRGHAPELLPENRIGHRSHSTRGGDGMESGDLAPHGTTIVALTYKGGVLLAGDRRATQGNLIASRDVEKVYVTDEYSAAGIAGTAGIAIELVRLFAVELEHYEKIEGVPLTFDGKANRLASMVRGNLGAAMQGLAVVPLLVGYDLDADEEARAGRIVSYDVVGGRYEERAGYHAVGSGSLFAKSALKKIYSPDSDEETALRAAIESLYDAADDDSATGGPDLTRGIYPTAVTITQAGAVHVSEETTSELARRIVAERTEEGGSAR</sequence>
<accession>C1ASP7</accession>
<proteinExistence type="inferred from homology"/>
<feature type="propeptide" id="PRO_0000397566" description="Removed in mature form; by autocatalysis" evidence="1">
    <location>
        <begin position="1"/>
        <end position="65"/>
    </location>
</feature>
<feature type="chain" id="PRO_0000397567" description="Proteasome subunit beta">
    <location>
        <begin position="66"/>
        <end position="294"/>
    </location>
</feature>
<feature type="active site" description="Nucleophile" evidence="1">
    <location>
        <position position="66"/>
    </location>
</feature>
<reference key="1">
    <citation type="submission" date="2009-03" db="EMBL/GenBank/DDBJ databases">
        <title>Comparison of the complete genome sequences of Rhodococcus erythropolis PR4 and Rhodococcus opacus B4.</title>
        <authorList>
            <person name="Takarada H."/>
            <person name="Sekine M."/>
            <person name="Hosoyama A."/>
            <person name="Yamada R."/>
            <person name="Fujisawa T."/>
            <person name="Omata S."/>
            <person name="Shimizu A."/>
            <person name="Tsukatani N."/>
            <person name="Tanikawa S."/>
            <person name="Fujita N."/>
            <person name="Harayama S."/>
        </authorList>
    </citation>
    <scope>NUCLEOTIDE SEQUENCE [LARGE SCALE GENOMIC DNA]</scope>
    <source>
        <strain>B4</strain>
    </source>
</reference>
<gene>
    <name evidence="1" type="primary">prcB</name>
    <name type="ordered locus">ROP_05820</name>
</gene>
<dbReference type="EC" id="3.4.25.1" evidence="1"/>
<dbReference type="EMBL" id="AP011115">
    <property type="protein sequence ID" value="BAH48829.1"/>
    <property type="molecule type" value="Genomic_DNA"/>
</dbReference>
<dbReference type="RefSeq" id="WP_012687836.1">
    <property type="nucleotide sequence ID" value="NC_012522.1"/>
</dbReference>
<dbReference type="SMR" id="C1ASP7"/>
<dbReference type="STRING" id="632772.ROP_05820"/>
<dbReference type="MEROPS" id="T01.005"/>
<dbReference type="KEGG" id="rop:ROP_05820"/>
<dbReference type="PATRIC" id="fig|632772.20.peg.640"/>
<dbReference type="HOGENOM" id="CLU_035750_2_0_11"/>
<dbReference type="OrthoDB" id="5174038at2"/>
<dbReference type="UniPathway" id="UPA00997"/>
<dbReference type="Proteomes" id="UP000002212">
    <property type="component" value="Chromosome"/>
</dbReference>
<dbReference type="GO" id="GO:0005737">
    <property type="term" value="C:cytoplasm"/>
    <property type="evidence" value="ECO:0007669"/>
    <property type="project" value="UniProtKB-SubCell"/>
</dbReference>
<dbReference type="GO" id="GO:0019774">
    <property type="term" value="C:proteasome core complex, beta-subunit complex"/>
    <property type="evidence" value="ECO:0007669"/>
    <property type="project" value="UniProtKB-UniRule"/>
</dbReference>
<dbReference type="GO" id="GO:0004298">
    <property type="term" value="F:threonine-type endopeptidase activity"/>
    <property type="evidence" value="ECO:0007669"/>
    <property type="project" value="UniProtKB-UniRule"/>
</dbReference>
<dbReference type="GO" id="GO:0019941">
    <property type="term" value="P:modification-dependent protein catabolic process"/>
    <property type="evidence" value="ECO:0007669"/>
    <property type="project" value="UniProtKB-UniRule"/>
</dbReference>
<dbReference type="GO" id="GO:0010498">
    <property type="term" value="P:proteasomal protein catabolic process"/>
    <property type="evidence" value="ECO:0007669"/>
    <property type="project" value="UniProtKB-UniRule"/>
</dbReference>
<dbReference type="CDD" id="cd01906">
    <property type="entry name" value="proteasome_protease_HslV"/>
    <property type="match status" value="1"/>
</dbReference>
<dbReference type="FunFam" id="3.60.20.10:FF:000046">
    <property type="entry name" value="Proteasome subunit beta"/>
    <property type="match status" value="1"/>
</dbReference>
<dbReference type="Gene3D" id="3.60.20.10">
    <property type="entry name" value="Glutamine Phosphoribosylpyrophosphate, subunit 1, domain 1"/>
    <property type="match status" value="1"/>
</dbReference>
<dbReference type="HAMAP" id="MF_02113_B">
    <property type="entry name" value="Proteasome_B_B"/>
    <property type="match status" value="1"/>
</dbReference>
<dbReference type="InterPro" id="IPR029055">
    <property type="entry name" value="Ntn_hydrolases_N"/>
</dbReference>
<dbReference type="InterPro" id="IPR001353">
    <property type="entry name" value="Proteasome_sua/b"/>
</dbReference>
<dbReference type="InterPro" id="IPR023333">
    <property type="entry name" value="Proteasome_suB-type"/>
</dbReference>
<dbReference type="InterPro" id="IPR022483">
    <property type="entry name" value="PSB_actinobac"/>
</dbReference>
<dbReference type="NCBIfam" id="TIGR03690">
    <property type="entry name" value="20S_bact_beta"/>
    <property type="match status" value="1"/>
</dbReference>
<dbReference type="PANTHER" id="PTHR32194:SF0">
    <property type="entry name" value="ATP-DEPENDENT PROTEASE SUBUNIT HSLV"/>
    <property type="match status" value="1"/>
</dbReference>
<dbReference type="PANTHER" id="PTHR32194">
    <property type="entry name" value="METALLOPROTEASE TLDD"/>
    <property type="match status" value="1"/>
</dbReference>
<dbReference type="Pfam" id="PF00227">
    <property type="entry name" value="Proteasome"/>
    <property type="match status" value="1"/>
</dbReference>
<dbReference type="SUPFAM" id="SSF56235">
    <property type="entry name" value="N-terminal nucleophile aminohydrolases (Ntn hydrolases)"/>
    <property type="match status" value="1"/>
</dbReference>
<dbReference type="PROSITE" id="PS51476">
    <property type="entry name" value="PROTEASOME_BETA_2"/>
    <property type="match status" value="1"/>
</dbReference>
<evidence type="ECO:0000255" key="1">
    <source>
        <dbReference type="HAMAP-Rule" id="MF_02113"/>
    </source>
</evidence>